<reference key="1">
    <citation type="journal article" date="1997" name="Nature">
        <title>The nucleotide sequence of Saccharomyces cerevisiae chromosome XV.</title>
        <authorList>
            <person name="Dujon B."/>
            <person name="Albermann K."/>
            <person name="Aldea M."/>
            <person name="Alexandraki D."/>
            <person name="Ansorge W."/>
            <person name="Arino J."/>
            <person name="Benes V."/>
            <person name="Bohn C."/>
            <person name="Bolotin-Fukuhara M."/>
            <person name="Bordonne R."/>
            <person name="Boyer J."/>
            <person name="Camasses A."/>
            <person name="Casamayor A."/>
            <person name="Casas C."/>
            <person name="Cheret G."/>
            <person name="Cziepluch C."/>
            <person name="Daignan-Fornier B."/>
            <person name="Dang V.-D."/>
            <person name="de Haan M."/>
            <person name="Delius H."/>
            <person name="Durand P."/>
            <person name="Fairhead C."/>
            <person name="Feldmann H."/>
            <person name="Gaillon L."/>
            <person name="Galisson F."/>
            <person name="Gamo F.-J."/>
            <person name="Gancedo C."/>
            <person name="Goffeau A."/>
            <person name="Goulding S.E."/>
            <person name="Grivell L.A."/>
            <person name="Habbig B."/>
            <person name="Hand N.J."/>
            <person name="Hani J."/>
            <person name="Hattenhorst U."/>
            <person name="Hebling U."/>
            <person name="Hernando Y."/>
            <person name="Herrero E."/>
            <person name="Heumann K."/>
            <person name="Hiesel R."/>
            <person name="Hilger F."/>
            <person name="Hofmann B."/>
            <person name="Hollenberg C.P."/>
            <person name="Hughes B."/>
            <person name="Jauniaux J.-C."/>
            <person name="Kalogeropoulos A."/>
            <person name="Katsoulou C."/>
            <person name="Kordes E."/>
            <person name="Lafuente M.J."/>
            <person name="Landt O."/>
            <person name="Louis E.J."/>
            <person name="Maarse A.C."/>
            <person name="Madania A."/>
            <person name="Mannhaupt G."/>
            <person name="Marck C."/>
            <person name="Martin R.P."/>
            <person name="Mewes H.-W."/>
            <person name="Michaux G."/>
            <person name="Paces V."/>
            <person name="Parle-McDermott A.G."/>
            <person name="Pearson B.M."/>
            <person name="Perrin A."/>
            <person name="Pettersson B."/>
            <person name="Poch O."/>
            <person name="Pohl T.M."/>
            <person name="Poirey R."/>
            <person name="Portetelle D."/>
            <person name="Pujol A."/>
            <person name="Purnelle B."/>
            <person name="Ramezani Rad M."/>
            <person name="Rechmann S."/>
            <person name="Schwager C."/>
            <person name="Schweizer M."/>
            <person name="Sor F."/>
            <person name="Sterky F."/>
            <person name="Tarassov I.A."/>
            <person name="Teodoru C."/>
            <person name="Tettelin H."/>
            <person name="Thierry A."/>
            <person name="Tobiasch E."/>
            <person name="Tzermia M."/>
            <person name="Uhlen M."/>
            <person name="Unseld M."/>
            <person name="Valens M."/>
            <person name="Vandenbol M."/>
            <person name="Vetter I."/>
            <person name="Vlcek C."/>
            <person name="Voet M."/>
            <person name="Volckaert G."/>
            <person name="Voss H."/>
            <person name="Wambutt R."/>
            <person name="Wedler H."/>
            <person name="Wiemann S."/>
            <person name="Winsor B."/>
            <person name="Wolfe K.H."/>
            <person name="Zollner A."/>
            <person name="Zumstein E."/>
            <person name="Kleine K."/>
        </authorList>
    </citation>
    <scope>NUCLEOTIDE SEQUENCE [LARGE SCALE GENOMIC DNA]</scope>
    <source>
        <strain>ATCC 204508 / S288c</strain>
    </source>
</reference>
<reference key="2">
    <citation type="journal article" date="2014" name="G3 (Bethesda)">
        <title>The reference genome sequence of Saccharomyces cerevisiae: Then and now.</title>
        <authorList>
            <person name="Engel S.R."/>
            <person name="Dietrich F.S."/>
            <person name="Fisk D.G."/>
            <person name="Binkley G."/>
            <person name="Balakrishnan R."/>
            <person name="Costanzo M.C."/>
            <person name="Dwight S.S."/>
            <person name="Hitz B.C."/>
            <person name="Karra K."/>
            <person name="Nash R.S."/>
            <person name="Weng S."/>
            <person name="Wong E.D."/>
            <person name="Lloyd P."/>
            <person name="Skrzypek M.S."/>
            <person name="Miyasato S.R."/>
            <person name="Simison M."/>
            <person name="Cherry J.M."/>
        </authorList>
    </citation>
    <scope>GENOME REANNOTATION</scope>
    <source>
        <strain>ATCC 204508 / S288c</strain>
    </source>
</reference>
<reference key="3">
    <citation type="journal article" date="1999" name="Genetics">
        <title>Genetic control of recombination partner preference in yeast meiosis. Isolation and characterization of mutants elevated for meiotic unequal sister-chromatid recombination.</title>
        <authorList>
            <person name="Thompson D.A."/>
            <person name="Stahl F.W."/>
        </authorList>
    </citation>
    <scope>FUNCTION</scope>
</reference>
<reference key="4">
    <citation type="journal article" date="2003" name="Nature">
        <title>Global analysis of protein localization in budding yeast.</title>
        <authorList>
            <person name="Huh W.-K."/>
            <person name="Falvo J.V."/>
            <person name="Gerke L.C."/>
            <person name="Carroll A.S."/>
            <person name="Howson R.W."/>
            <person name="Weissman J.S."/>
            <person name="O'Shea E.K."/>
        </authorList>
    </citation>
    <scope>SUBCELLULAR LOCATION [LARGE SCALE ANALYSIS]</scope>
</reference>
<reference key="5">
    <citation type="journal article" date="2003" name="Nature">
        <title>Global analysis of protein expression in yeast.</title>
        <authorList>
            <person name="Ghaemmaghami S."/>
            <person name="Huh W.-K."/>
            <person name="Bower K."/>
            <person name="Howson R.W."/>
            <person name="Belle A."/>
            <person name="Dephoure N."/>
            <person name="O'Shea E.K."/>
            <person name="Weissman J.S."/>
        </authorList>
    </citation>
    <scope>LEVEL OF PROTEIN EXPRESSION [LARGE SCALE ANALYSIS]</scope>
</reference>
<reference key="6">
    <citation type="journal article" date="2003" name="Proc. Natl. Acad. Sci. U.S.A.">
        <title>The proteome of Saccharomyces cerevisiae mitochondria.</title>
        <authorList>
            <person name="Sickmann A."/>
            <person name="Reinders J."/>
            <person name="Wagner Y."/>
            <person name="Joppich C."/>
            <person name="Zahedi R.P."/>
            <person name="Meyer H.E."/>
            <person name="Schoenfisch B."/>
            <person name="Perschil I."/>
            <person name="Chacinska A."/>
            <person name="Guiard B."/>
            <person name="Rehling P."/>
            <person name="Pfanner N."/>
            <person name="Meisinger C."/>
        </authorList>
    </citation>
    <scope>SUBCELLULAR LOCATION [LARGE SCALE ANALYSIS]</scope>
    <source>
        <strain>ATCC 76625 / YPH499</strain>
    </source>
</reference>
<organism>
    <name type="scientific">Saccharomyces cerevisiae (strain ATCC 204508 / S288c)</name>
    <name type="common">Baker's yeast</name>
    <dbReference type="NCBI Taxonomy" id="559292"/>
    <lineage>
        <taxon>Eukaryota</taxon>
        <taxon>Fungi</taxon>
        <taxon>Dikarya</taxon>
        <taxon>Ascomycota</taxon>
        <taxon>Saccharomycotina</taxon>
        <taxon>Saccharomycetes</taxon>
        <taxon>Saccharomycetales</taxon>
        <taxon>Saccharomycetaceae</taxon>
        <taxon>Saccharomyces</taxon>
    </lineage>
</organism>
<evidence type="ECO:0000255" key="1"/>
<evidence type="ECO:0000269" key="2">
    <source>
    </source>
</evidence>
<evidence type="ECO:0000269" key="3">
    <source>
    </source>
</evidence>
<evidence type="ECO:0000269" key="4">
    <source>
    </source>
</evidence>
<evidence type="ECO:0000269" key="5">
    <source>
    </source>
</evidence>
<keyword id="KW-0233">DNA recombination</keyword>
<keyword id="KW-0469">Meiosis</keyword>
<keyword id="KW-0496">Mitochondrion</keyword>
<keyword id="KW-1185">Reference proteome</keyword>
<keyword id="KW-0809">Transit peptide</keyword>
<dbReference type="EMBL" id="Z75262">
    <property type="protein sequence ID" value="CAA99683.1"/>
    <property type="molecule type" value="Genomic_DNA"/>
</dbReference>
<dbReference type="EMBL" id="BK006948">
    <property type="protein sequence ID" value="DAA11115.1"/>
    <property type="molecule type" value="Genomic_DNA"/>
</dbReference>
<dbReference type="PIR" id="S67266">
    <property type="entry name" value="S67266"/>
</dbReference>
<dbReference type="RefSeq" id="NP_014999.1">
    <property type="nucleotide sequence ID" value="NM_001183774.1"/>
</dbReference>
<dbReference type="BioGRID" id="34739">
    <property type="interactions" value="224"/>
</dbReference>
<dbReference type="DIP" id="DIP-4057N"/>
<dbReference type="FunCoup" id="Q08818">
    <property type="interactions" value="108"/>
</dbReference>
<dbReference type="IntAct" id="Q08818">
    <property type="interactions" value="2"/>
</dbReference>
<dbReference type="STRING" id="4932.YOR354C"/>
<dbReference type="iPTMnet" id="Q08818"/>
<dbReference type="PaxDb" id="4932-YOR354C"/>
<dbReference type="PeptideAtlas" id="Q08818"/>
<dbReference type="TopDownProteomics" id="Q08818"/>
<dbReference type="EnsemblFungi" id="YOR354C_mRNA">
    <property type="protein sequence ID" value="YOR354C"/>
    <property type="gene ID" value="YOR354C"/>
</dbReference>
<dbReference type="GeneID" id="854536"/>
<dbReference type="KEGG" id="sce:YOR354C"/>
<dbReference type="AGR" id="SGD:S000005881"/>
<dbReference type="SGD" id="S000005881">
    <property type="gene designation" value="MSC6"/>
</dbReference>
<dbReference type="VEuPathDB" id="FungiDB:YOR354C"/>
<dbReference type="eggNOG" id="ENOG502QW5R">
    <property type="taxonomic scope" value="Eukaryota"/>
</dbReference>
<dbReference type="HOGENOM" id="CLU_398067_0_0_1"/>
<dbReference type="InParanoid" id="Q08818"/>
<dbReference type="OMA" id="WVKYLET"/>
<dbReference type="OrthoDB" id="4061195at2759"/>
<dbReference type="BioCyc" id="YEAST:G3O-33825-MONOMER"/>
<dbReference type="BioGRID-ORCS" id="854536">
    <property type="hits" value="0 hits in 10 CRISPR screens"/>
</dbReference>
<dbReference type="PRO" id="PR:Q08818"/>
<dbReference type="Proteomes" id="UP000002311">
    <property type="component" value="Chromosome XV"/>
</dbReference>
<dbReference type="RNAct" id="Q08818">
    <property type="molecule type" value="protein"/>
</dbReference>
<dbReference type="GO" id="GO:0005759">
    <property type="term" value="C:mitochondrial matrix"/>
    <property type="evidence" value="ECO:0000314"/>
    <property type="project" value="SGD"/>
</dbReference>
<dbReference type="GO" id="GO:0005739">
    <property type="term" value="C:mitochondrion"/>
    <property type="evidence" value="ECO:0000314"/>
    <property type="project" value="SGD"/>
</dbReference>
<dbReference type="GO" id="GO:0003729">
    <property type="term" value="F:mRNA binding"/>
    <property type="evidence" value="ECO:0007005"/>
    <property type="project" value="SGD"/>
</dbReference>
<dbReference type="GO" id="GO:0070124">
    <property type="term" value="P:mitochondrial translational initiation"/>
    <property type="evidence" value="ECO:0000315"/>
    <property type="project" value="SGD"/>
</dbReference>
<dbReference type="GO" id="GO:0007131">
    <property type="term" value="P:reciprocal meiotic recombination"/>
    <property type="evidence" value="ECO:0000315"/>
    <property type="project" value="SGD"/>
</dbReference>
<protein>
    <recommendedName>
        <fullName>Meiotic sister-chromatid recombination protein 6, mitochondrial</fullName>
    </recommendedName>
</protein>
<accession>Q08818</accession>
<accession>D6W349</accession>
<feature type="transit peptide" description="Mitochondrion" evidence="1">
    <location>
        <begin position="1"/>
        <end position="30"/>
    </location>
</feature>
<feature type="chain" id="PRO_0000042820" description="Meiotic sister-chromatid recombination protein 6, mitochondrial">
    <location>
        <begin position="31"/>
        <end position="692"/>
    </location>
</feature>
<name>MSC6_YEAST</name>
<comment type="function">
    <text evidence="2">May be involved in the control of meiotic sister-chromatid recombination.</text>
</comment>
<comment type="subcellular location">
    <subcellularLocation>
        <location evidence="3 5">Mitochondrion</location>
    </subcellularLocation>
</comment>
<comment type="miscellaneous">
    <text evidence="4">Present with 7250 molecules/cell in log phase SD medium.</text>
</comment>
<gene>
    <name type="primary">MSC6</name>
    <name type="ordered locus">YOR354C</name>
</gene>
<proteinExistence type="evidence at protein level"/>
<sequence length="692" mass="79947">MLSHNALRAFDCSKVIISRRCLTSSTSIYQQSSVHLQETDDGHSGNREKHVSPFERVQNLAADLKNELKAPDSDINEVFNDFKDKIESLKQKLRNPSPMERSHLLANFSSDLLQELSYRSKNMTLDPYQVLNTLCQYKLARSQHFTIVLKYLLYNQSPQDVIALWVKYLETISENPVILLQNSSSRAHMQNIAITTIAYLSLPENTVDINILYKILQIDRKMGQVLPFNMIRRMLSTEFSSLERRDVIIKNLNTLYYQYTVQDSDHFLSQIENAPRWIDLRDLYGQYNKLEGEKNVEIISKFMDKFIDLDKPDQVVTIYNQYSKVFPNSTSLKDCLLRAVSHLRAKSSKEKLDRILAVWNSVIKPGDNIKNTSYATLVNALTDSGNFNHLKEFWEEELPKKFKKDPIVKEAFLLALCQTSPLKYDQVKGELAETVKTKKLFNKVLLLMLDDEKVSEEQFNTFYYNHYPSDGVLPPTLDTLSIKMYANYKFQAEDTRPQFDLLQSVSINPTDYEKVEKITKAFISVCPTVEPIRQLYKQLGTHLNARNYADFISAEFNKPDGTVAEAKNLFSDFLSYQKTRKRNVDNTPLNALLLGFCDKLYKSKHSEYVPYIEKYYNLAKDSSIRVSNLAVSKILFNLATFARNTQQLSDKEVAFINQFMRDLGTNEGFRPNPKDIQILKECDGITVPEKLT</sequence>